<reference evidence="12" key="1">
    <citation type="journal article" date="2003" name="FEBS Lett.">
        <title>A single aquaporin gene encodes a water/glycerol/urea facilitator in Toxoplasma gondii with similarity to plant tonoplast intrinsic proteins.</title>
        <authorList>
            <person name="Pavlovic-Djuranovic S."/>
            <person name="Schultz J.E."/>
            <person name="Beitz E."/>
        </authorList>
    </citation>
    <scope>NUCLEOTIDE SEQUENCE [GENOMIC DNA]</scope>
    <scope>FUNCTION</scope>
    <scope>TRANSPORTER ACTIVITY</scope>
    <scope>SUBUNIT</scope>
</reference>
<reference evidence="14" key="2">
    <citation type="submission" date="2013-04" db="EMBL/GenBank/DDBJ databases">
        <authorList>
            <person name="Sibley D."/>
            <person name="Venepally P."/>
            <person name="Karamycheva S."/>
            <person name="Hadjithomas M."/>
            <person name="Khan A."/>
            <person name="Brunk B."/>
            <person name="Roos D."/>
            <person name="Caler E."/>
            <person name="Lorenzi H."/>
        </authorList>
    </citation>
    <scope>NUCLEOTIDE SEQUENCE [LARGE SCALE GENOMIC DNA]</scope>
    <source>
        <strain evidence="14">ATCC 50611 / Me49</strain>
    </source>
</reference>
<reference evidence="11" key="3">
    <citation type="journal article" date="2006" name="Mol. Microbiol.">
        <title>Ammonia permeability of the aquaglyceroporins from Plasmodium falciparum, Toxoplasma gondii and Trypansoma brucei.</title>
        <authorList>
            <person name="Zeuthen T."/>
            <person name="Wu B."/>
            <person name="Pavlovic-Djuranovic S."/>
            <person name="Holm L.M."/>
            <person name="Uzcategui N.L."/>
            <person name="Duszenko M."/>
            <person name="Kun J.F."/>
            <person name="Schultz J.E."/>
            <person name="Beitz E."/>
        </authorList>
    </citation>
    <scope>FUNCTION</scope>
    <scope>TRANSPORTER ACTIVITY</scope>
</reference>
<reference evidence="11" key="4">
    <citation type="journal article" date="2010" name="Mol. Microbiol.">
        <title>Characterization of a novel organelle in Toxoplasma gondii with similar composition and function to the plant vacuole.</title>
        <authorList>
            <person name="Miranda K."/>
            <person name="Pace D.A."/>
            <person name="Cintron R."/>
            <person name="Rodrigues J.C."/>
            <person name="Fang J."/>
            <person name="Smith A."/>
            <person name="Rohloff P."/>
            <person name="Coelho E."/>
            <person name="de Haas F."/>
            <person name="de Souza W."/>
            <person name="Coppens I."/>
            <person name="Sibley L.D."/>
            <person name="Moreno S.N."/>
        </authorList>
    </citation>
    <scope>SUBCELLULAR LOCATION</scope>
</reference>
<dbReference type="EMBL" id="AJ581909">
    <property type="protein sequence ID" value="CAE46485.1"/>
    <property type="molecule type" value="Genomic_DNA"/>
</dbReference>
<dbReference type="EMBL" id="KE138836">
    <property type="protein sequence ID" value="EPT26447.1"/>
    <property type="molecule type" value="Genomic_DNA"/>
</dbReference>
<dbReference type="RefSeq" id="XP_002370864.1">
    <property type="nucleotide sequence ID" value="XM_002370823.2"/>
</dbReference>
<dbReference type="SMR" id="A0A125YZH9"/>
<dbReference type="EnsemblProtists" id="TGME49_215450-t26_1">
    <property type="protein sequence ID" value="TGME49_215450-t26_1-p1-CDS1"/>
    <property type="gene ID" value="TGME49_215450"/>
</dbReference>
<dbReference type="GeneID" id="7897043"/>
<dbReference type="KEGG" id="tgo:TGME49_215450"/>
<dbReference type="VEuPathDB" id="ToxoDB:TGARI_215450"/>
<dbReference type="VEuPathDB" id="ToxoDB:TGCAST_215450"/>
<dbReference type="VEuPathDB" id="ToxoDB:TGCOUG_215450"/>
<dbReference type="VEuPathDB" id="ToxoDB:TGDOM2_215450"/>
<dbReference type="VEuPathDB" id="ToxoDB:TGFOU_215450"/>
<dbReference type="VEuPathDB" id="ToxoDB:TGGT1_215450"/>
<dbReference type="VEuPathDB" id="ToxoDB:TGMAS_215450"/>
<dbReference type="VEuPathDB" id="ToxoDB:TGME49_215450"/>
<dbReference type="VEuPathDB" id="ToxoDB:TGP89_215450"/>
<dbReference type="VEuPathDB" id="ToxoDB:TGPRC2_215450"/>
<dbReference type="VEuPathDB" id="ToxoDB:TGRH88_039160"/>
<dbReference type="VEuPathDB" id="ToxoDB:TGRUB_215450"/>
<dbReference type="VEuPathDB" id="ToxoDB:TGVAND_215450"/>
<dbReference type="VEuPathDB" id="ToxoDB:TGVEG_215450"/>
<dbReference type="OrthoDB" id="3222at2759"/>
<dbReference type="PhylomeDB" id="A0A125YZH9"/>
<dbReference type="Proteomes" id="UP000001529">
    <property type="component" value="Chromosome X"/>
</dbReference>
<dbReference type="GO" id="GO:0005774">
    <property type="term" value="C:vacuolar membrane"/>
    <property type="evidence" value="ECO:0000314"/>
    <property type="project" value="UniProtKB"/>
</dbReference>
<dbReference type="GO" id="GO:0015254">
    <property type="term" value="F:glycerol channel activity"/>
    <property type="evidence" value="ECO:0000314"/>
    <property type="project" value="UniProtKB"/>
</dbReference>
<dbReference type="GO" id="GO:0042802">
    <property type="term" value="F:identical protein binding"/>
    <property type="evidence" value="ECO:0000314"/>
    <property type="project" value="UniProtKB"/>
</dbReference>
<dbReference type="GO" id="GO:0015166">
    <property type="term" value="F:polyol transmembrane transporter activity"/>
    <property type="evidence" value="ECO:0000314"/>
    <property type="project" value="UniProtKB"/>
</dbReference>
<dbReference type="GO" id="GO:0015204">
    <property type="term" value="F:urea transmembrane transporter activity"/>
    <property type="evidence" value="ECO:0000314"/>
    <property type="project" value="UniProtKB"/>
</dbReference>
<dbReference type="GO" id="GO:0015250">
    <property type="term" value="F:water channel activity"/>
    <property type="evidence" value="ECO:0000314"/>
    <property type="project" value="UniProtKB"/>
</dbReference>
<dbReference type="GO" id="GO:0015793">
    <property type="term" value="P:glycerol transmembrane transport"/>
    <property type="evidence" value="ECO:0000314"/>
    <property type="project" value="UniProtKB"/>
</dbReference>
<dbReference type="GO" id="GO:0015791">
    <property type="term" value="P:polyol transmembrane transport"/>
    <property type="evidence" value="ECO:0000314"/>
    <property type="project" value="UniProtKB"/>
</dbReference>
<dbReference type="GO" id="GO:0071918">
    <property type="term" value="P:urea transmembrane transport"/>
    <property type="evidence" value="ECO:0000314"/>
    <property type="project" value="UniProtKB"/>
</dbReference>
<dbReference type="GO" id="GO:0006833">
    <property type="term" value="P:water transport"/>
    <property type="evidence" value="ECO:0000314"/>
    <property type="project" value="UniProtKB"/>
</dbReference>
<dbReference type="Gene3D" id="1.20.1080.10">
    <property type="entry name" value="Glycerol uptake facilitator protein"/>
    <property type="match status" value="1"/>
</dbReference>
<dbReference type="InterPro" id="IPR023271">
    <property type="entry name" value="Aquaporin-like"/>
</dbReference>
<dbReference type="InterPro" id="IPR034294">
    <property type="entry name" value="Aquaporin_transptr"/>
</dbReference>
<dbReference type="InterPro" id="IPR000425">
    <property type="entry name" value="MIP"/>
</dbReference>
<dbReference type="PANTHER" id="PTHR45665">
    <property type="entry name" value="AQUAPORIN-8"/>
    <property type="match status" value="1"/>
</dbReference>
<dbReference type="PANTHER" id="PTHR45665:SF9">
    <property type="entry name" value="AQUAPORIN-8"/>
    <property type="match status" value="1"/>
</dbReference>
<dbReference type="Pfam" id="PF00230">
    <property type="entry name" value="MIP"/>
    <property type="match status" value="1"/>
</dbReference>
<dbReference type="PRINTS" id="PR00783">
    <property type="entry name" value="MINTRINSICP"/>
</dbReference>
<dbReference type="SUPFAM" id="SSF81338">
    <property type="entry name" value="Aquaporin-like"/>
    <property type="match status" value="1"/>
</dbReference>
<gene>
    <name evidence="12" type="primary">AQP</name>
    <name evidence="13" type="ORF">TGME49_215450</name>
</gene>
<proteinExistence type="evidence at protein level"/>
<keyword id="KW-0472">Membrane</keyword>
<keyword id="KW-1185">Reference proteome</keyword>
<keyword id="KW-0677">Repeat</keyword>
<keyword id="KW-0812">Transmembrane</keyword>
<keyword id="KW-1133">Transmembrane helix</keyword>
<keyword id="KW-0813">Transport</keyword>
<keyword id="KW-0926">Vacuole</keyword>
<accession>A0A125YZH9</accession>
<accession>Q70GH0</accession>
<sequence>MDQFVFSGGSEGGGELGGDRERDSLTPELGRFEHLIFNMQKYFCEFFAALVIVSAVAFGLAKEGGAQAAPLSITSTIFALITLFKDISGAHFNPAVSCTIYMTDPRFTLVDLLCYVAAQLIGGTVGAFIGYGIMGKALDILPLDPGMSASRQLFHEVIPTMVMIYAVLVLVFGYGVMWELTVPFVVGACVLAGAFAGATMNPAVTFGIFISNICTKNTNIDVAALLVTLFGPFLGAMFAFLGYVGTHAYHNPVPLRFLNFRGL</sequence>
<feature type="chain" id="PRO_0000460647" description="Aquaglyceroporin">
    <location>
        <begin position="1"/>
        <end position="263"/>
    </location>
</feature>
<feature type="transmembrane region" description="Helical" evidence="2">
    <location>
        <begin position="41"/>
        <end position="61"/>
    </location>
</feature>
<feature type="transmembrane region" description="Helical" evidence="2">
    <location>
        <begin position="64"/>
        <end position="84"/>
    </location>
</feature>
<feature type="transmembrane region" description="Helical" evidence="2">
    <location>
        <begin position="113"/>
        <end position="133"/>
    </location>
</feature>
<feature type="transmembrane region" description="Helical" evidence="2">
    <location>
        <begin position="157"/>
        <end position="177"/>
    </location>
</feature>
<feature type="transmembrane region" description="Helical" evidence="2">
    <location>
        <begin position="180"/>
        <end position="200"/>
    </location>
</feature>
<feature type="transmembrane region" description="Helical" evidence="2">
    <location>
        <begin position="222"/>
        <end position="242"/>
    </location>
</feature>
<feature type="region of interest" description="Disordered" evidence="4">
    <location>
        <begin position="1"/>
        <end position="22"/>
    </location>
</feature>
<feature type="sequence conflict" description="In Ref. 1; CAE46485." evidence="11" ref="1">
    <location>
        <begin position="5"/>
        <end position="33"/>
    </location>
</feature>
<protein>
    <recommendedName>
        <fullName evidence="9">Aquaglyceroporin</fullName>
        <shortName evidence="8 9">TgAQP</shortName>
    </recommendedName>
    <alternativeName>
        <fullName evidence="8">Aquaporin</fullName>
    </alternativeName>
    <alternativeName>
        <fullName evidence="13">Aquaporin 1</fullName>
        <shortName evidence="10">TgAQP1</shortName>
    </alternativeName>
</protein>
<evidence type="ECO:0000250" key="1">
    <source>
        <dbReference type="UniProtKB" id="P55087"/>
    </source>
</evidence>
<evidence type="ECO:0000255" key="2"/>
<evidence type="ECO:0000255" key="3">
    <source>
        <dbReference type="RuleBase" id="RU000477"/>
    </source>
</evidence>
<evidence type="ECO:0000256" key="4">
    <source>
        <dbReference type="SAM" id="MobiDB-lite"/>
    </source>
</evidence>
<evidence type="ECO:0000269" key="5">
    <source>
    </source>
</evidence>
<evidence type="ECO:0000269" key="6">
    <source>
    </source>
</evidence>
<evidence type="ECO:0000269" key="7">
    <source>
    </source>
</evidence>
<evidence type="ECO:0000303" key="8">
    <source>
    </source>
</evidence>
<evidence type="ECO:0000303" key="9">
    <source>
    </source>
</evidence>
<evidence type="ECO:0000303" key="10">
    <source>
    </source>
</evidence>
<evidence type="ECO:0000305" key="11"/>
<evidence type="ECO:0000312" key="12">
    <source>
        <dbReference type="EMBL" id="CAE46485.1"/>
    </source>
</evidence>
<evidence type="ECO:0000312" key="13">
    <source>
        <dbReference type="EMBL" id="EPT26447.1"/>
    </source>
</evidence>
<evidence type="ECO:0000312" key="14">
    <source>
        <dbReference type="Proteomes" id="UP000001529"/>
    </source>
</evidence>
<comment type="function">
    <text evidence="5 6">Mediates water and glycerol transport across cell membranes (PubMed:14675763, PubMed:16889642). Permeable to selected sugar alcohols of up to five carbons and urea (PubMed:14675763, PubMed:16889642). Permeable to methylamine/methylammonium (PubMed:16889642).</text>
</comment>
<comment type="catalytic activity">
    <reaction evidence="5">
        <text>H2O(in) = H2O(out)</text>
        <dbReference type="Rhea" id="RHEA:29667"/>
        <dbReference type="ChEBI" id="CHEBI:15377"/>
    </reaction>
</comment>
<comment type="catalytic activity">
    <reaction evidence="5 6">
        <text>glycerol(in) = glycerol(out)</text>
        <dbReference type="Rhea" id="RHEA:29675"/>
        <dbReference type="ChEBI" id="CHEBI:17754"/>
    </reaction>
</comment>
<comment type="catalytic activity">
    <reaction evidence="5 6">
        <text>urea(in) = urea(out)</text>
        <dbReference type="Rhea" id="RHEA:32799"/>
        <dbReference type="ChEBI" id="CHEBI:16199"/>
    </reaction>
</comment>
<comment type="subunit">
    <text evidence="5">Multimer.</text>
</comment>
<comment type="subcellular location">
    <subcellularLocation>
        <location evidence="7">Vacuole membrane</location>
        <topology evidence="2">Multi-pass membrane protein</topology>
    </subcellularLocation>
    <text evidence="7">Localizes to a multivesicular structure that exhibits similarities to the plant-like vacuole.</text>
</comment>
<comment type="domain">
    <text evidence="1">Aquaporins contain two tandem repeats each containing three membrane-spanning domains and a pore-forming loop with the signature motif Asn-Pro-Ala (NPA).</text>
</comment>
<comment type="miscellaneous">
    <text evidence="5">Can transport hydroxyurea, an antineoplastic agent with inhibitory effects on parasite proliferation.</text>
</comment>
<comment type="similarity">
    <text evidence="3">Belongs to the MIP/aquaporin (TC 1.A.8) family.</text>
</comment>
<name>AQP_TOXGM</name>
<organism evidence="14">
    <name type="scientific">Toxoplasma gondii (strain ATCC 50611 / Me49)</name>
    <dbReference type="NCBI Taxonomy" id="508771"/>
    <lineage>
        <taxon>Eukaryota</taxon>
        <taxon>Sar</taxon>
        <taxon>Alveolata</taxon>
        <taxon>Apicomplexa</taxon>
        <taxon>Conoidasida</taxon>
        <taxon>Coccidia</taxon>
        <taxon>Eucoccidiorida</taxon>
        <taxon>Eimeriorina</taxon>
        <taxon>Sarcocystidae</taxon>
        <taxon>Toxoplasma</taxon>
    </lineage>
</organism>